<reference key="1">
    <citation type="journal article" date="2001" name="Nature">
        <title>Genome sequence of Yersinia pestis, the causative agent of plague.</title>
        <authorList>
            <person name="Parkhill J."/>
            <person name="Wren B.W."/>
            <person name="Thomson N.R."/>
            <person name="Titball R.W."/>
            <person name="Holden M.T.G."/>
            <person name="Prentice M.B."/>
            <person name="Sebaihia M."/>
            <person name="James K.D."/>
            <person name="Churcher C.M."/>
            <person name="Mungall K.L."/>
            <person name="Baker S."/>
            <person name="Basham D."/>
            <person name="Bentley S.D."/>
            <person name="Brooks K."/>
            <person name="Cerdeno-Tarraga A.-M."/>
            <person name="Chillingworth T."/>
            <person name="Cronin A."/>
            <person name="Davies R.M."/>
            <person name="Davis P."/>
            <person name="Dougan G."/>
            <person name="Feltwell T."/>
            <person name="Hamlin N."/>
            <person name="Holroyd S."/>
            <person name="Jagels K."/>
            <person name="Karlyshev A.V."/>
            <person name="Leather S."/>
            <person name="Moule S."/>
            <person name="Oyston P.C.F."/>
            <person name="Quail M.A."/>
            <person name="Rutherford K.M."/>
            <person name="Simmonds M."/>
            <person name="Skelton J."/>
            <person name="Stevens K."/>
            <person name="Whitehead S."/>
            <person name="Barrell B.G."/>
        </authorList>
    </citation>
    <scope>NUCLEOTIDE SEQUENCE [LARGE SCALE GENOMIC DNA]</scope>
    <source>
        <strain>CO-92 / Biovar Orientalis</strain>
    </source>
</reference>
<reference key="2">
    <citation type="journal article" date="2002" name="J. Bacteriol.">
        <title>Genome sequence of Yersinia pestis KIM.</title>
        <authorList>
            <person name="Deng W."/>
            <person name="Burland V."/>
            <person name="Plunkett G. III"/>
            <person name="Boutin A."/>
            <person name="Mayhew G.F."/>
            <person name="Liss P."/>
            <person name="Perna N.T."/>
            <person name="Rose D.J."/>
            <person name="Mau B."/>
            <person name="Zhou S."/>
            <person name="Schwartz D.C."/>
            <person name="Fetherston J.D."/>
            <person name="Lindler L.E."/>
            <person name="Brubaker R.R."/>
            <person name="Plano G.V."/>
            <person name="Straley S.C."/>
            <person name="McDonough K.A."/>
            <person name="Nilles M.L."/>
            <person name="Matson J.S."/>
            <person name="Blattner F.R."/>
            <person name="Perry R.D."/>
        </authorList>
    </citation>
    <scope>NUCLEOTIDE SEQUENCE [LARGE SCALE GENOMIC DNA]</scope>
    <source>
        <strain>KIM10+ / Biovar Mediaevalis</strain>
    </source>
</reference>
<reference key="3">
    <citation type="journal article" date="2004" name="DNA Res.">
        <title>Complete genome sequence of Yersinia pestis strain 91001, an isolate avirulent to humans.</title>
        <authorList>
            <person name="Song Y."/>
            <person name="Tong Z."/>
            <person name="Wang J."/>
            <person name="Wang L."/>
            <person name="Guo Z."/>
            <person name="Han Y."/>
            <person name="Zhang J."/>
            <person name="Pei D."/>
            <person name="Zhou D."/>
            <person name="Qin H."/>
            <person name="Pang X."/>
            <person name="Han Y."/>
            <person name="Zhai J."/>
            <person name="Li M."/>
            <person name="Cui B."/>
            <person name="Qi Z."/>
            <person name="Jin L."/>
            <person name="Dai R."/>
            <person name="Chen F."/>
            <person name="Li S."/>
            <person name="Ye C."/>
            <person name="Du Z."/>
            <person name="Lin W."/>
            <person name="Wang J."/>
            <person name="Yu J."/>
            <person name="Yang H."/>
            <person name="Wang J."/>
            <person name="Huang P."/>
            <person name="Yang R."/>
        </authorList>
    </citation>
    <scope>NUCLEOTIDE SEQUENCE [LARGE SCALE GENOMIC DNA]</scope>
    <source>
        <strain>91001 / Biovar Mediaevalis</strain>
    </source>
</reference>
<evidence type="ECO:0000255" key="1">
    <source>
        <dbReference type="HAMAP-Rule" id="MF_00903"/>
    </source>
</evidence>
<evidence type="ECO:0000256" key="2">
    <source>
        <dbReference type="SAM" id="MobiDB-lite"/>
    </source>
</evidence>
<accession>Q8ZDH1</accession>
<accession>Q0WDT5</accession>
<protein>
    <recommendedName>
        <fullName evidence="1">Probable Sec-independent protein translocase protein TatE</fullName>
    </recommendedName>
</protein>
<comment type="function">
    <text evidence="1">Part of the twin-arginine translocation (Tat) system that transports large folded proteins containing a characteristic twin-arginine motif in their signal peptide across membranes. TatE shares overlapping functions with TatA.</text>
</comment>
<comment type="subcellular location">
    <subcellularLocation>
        <location evidence="1">Cell inner membrane</location>
        <topology evidence="1">Single-pass membrane protein</topology>
    </subcellularLocation>
</comment>
<comment type="similarity">
    <text evidence="1">Belongs to the TatA/E family. TatE subfamily.</text>
</comment>
<organism>
    <name type="scientific">Yersinia pestis</name>
    <dbReference type="NCBI Taxonomy" id="632"/>
    <lineage>
        <taxon>Bacteria</taxon>
        <taxon>Pseudomonadati</taxon>
        <taxon>Pseudomonadota</taxon>
        <taxon>Gammaproteobacteria</taxon>
        <taxon>Enterobacterales</taxon>
        <taxon>Yersiniaceae</taxon>
        <taxon>Yersinia</taxon>
    </lineage>
</organism>
<dbReference type="EMBL" id="AL590842">
    <property type="protein sequence ID" value="CAL21220.1"/>
    <property type="molecule type" value="Genomic_DNA"/>
</dbReference>
<dbReference type="EMBL" id="AE009952">
    <property type="protein sequence ID" value="AAM84747.1"/>
    <property type="molecule type" value="Genomic_DNA"/>
</dbReference>
<dbReference type="EMBL" id="AE017042">
    <property type="protein sequence ID" value="AAS61363.1"/>
    <property type="molecule type" value="Genomic_DNA"/>
</dbReference>
<dbReference type="PIR" id="AI0316">
    <property type="entry name" value="AI0316"/>
</dbReference>
<dbReference type="RefSeq" id="YP_002347553.1">
    <property type="nucleotide sequence ID" value="NC_003143.1"/>
</dbReference>
<dbReference type="SMR" id="Q8ZDH1"/>
<dbReference type="STRING" id="214092.YPO2597"/>
<dbReference type="PaxDb" id="214092-YPO2597"/>
<dbReference type="DNASU" id="1146117"/>
<dbReference type="EnsemblBacteria" id="AAS61363">
    <property type="protein sequence ID" value="AAS61363"/>
    <property type="gene ID" value="YP_1117"/>
</dbReference>
<dbReference type="KEGG" id="ype:YPO2597"/>
<dbReference type="KEGG" id="ypk:y1170"/>
<dbReference type="KEGG" id="ypm:YP_1117"/>
<dbReference type="PATRIC" id="fig|214092.21.peg.3026"/>
<dbReference type="eggNOG" id="COG1826">
    <property type="taxonomic scope" value="Bacteria"/>
</dbReference>
<dbReference type="HOGENOM" id="CLU_086034_5_1_6"/>
<dbReference type="OMA" id="ANLACPD"/>
<dbReference type="OrthoDB" id="7066617at2"/>
<dbReference type="Proteomes" id="UP000000815">
    <property type="component" value="Chromosome"/>
</dbReference>
<dbReference type="Proteomes" id="UP000001019">
    <property type="component" value="Chromosome"/>
</dbReference>
<dbReference type="Proteomes" id="UP000002490">
    <property type="component" value="Chromosome"/>
</dbReference>
<dbReference type="GO" id="GO:0033281">
    <property type="term" value="C:TAT protein transport complex"/>
    <property type="evidence" value="ECO:0007669"/>
    <property type="project" value="UniProtKB-UniRule"/>
</dbReference>
<dbReference type="GO" id="GO:0008320">
    <property type="term" value="F:protein transmembrane transporter activity"/>
    <property type="evidence" value="ECO:0007669"/>
    <property type="project" value="UniProtKB-UniRule"/>
</dbReference>
<dbReference type="GO" id="GO:0043953">
    <property type="term" value="P:protein transport by the Tat complex"/>
    <property type="evidence" value="ECO:0007669"/>
    <property type="project" value="UniProtKB-UniRule"/>
</dbReference>
<dbReference type="Gene3D" id="1.20.5.3310">
    <property type="match status" value="1"/>
</dbReference>
<dbReference type="HAMAP" id="MF_00236">
    <property type="entry name" value="TatA_E"/>
    <property type="match status" value="1"/>
</dbReference>
<dbReference type="HAMAP" id="MF_00903">
    <property type="entry name" value="TatE"/>
    <property type="match status" value="1"/>
</dbReference>
<dbReference type="InterPro" id="IPR003369">
    <property type="entry name" value="TatA/B/E"/>
</dbReference>
<dbReference type="InterPro" id="IPR006312">
    <property type="entry name" value="TatA/E"/>
</dbReference>
<dbReference type="InterPro" id="IPR024905">
    <property type="entry name" value="TatE"/>
</dbReference>
<dbReference type="NCBIfam" id="NF002448">
    <property type="entry name" value="PRK01614.1"/>
    <property type="match status" value="1"/>
</dbReference>
<dbReference type="NCBIfam" id="TIGR01411">
    <property type="entry name" value="tatAE"/>
    <property type="match status" value="1"/>
</dbReference>
<dbReference type="PANTHER" id="PTHR42982">
    <property type="entry name" value="SEC-INDEPENDENT PROTEIN TRANSLOCASE PROTEIN TATA"/>
    <property type="match status" value="1"/>
</dbReference>
<dbReference type="PANTHER" id="PTHR42982:SF5">
    <property type="entry name" value="SEC-INDEPENDENT PROTEIN TRANSLOCASE PROTEIN TATE"/>
    <property type="match status" value="1"/>
</dbReference>
<dbReference type="Pfam" id="PF02416">
    <property type="entry name" value="TatA_B_E"/>
    <property type="match status" value="1"/>
</dbReference>
<sequence>MEGLSITKLLVVGILIVLLFGTSKLRTLGADLGAALKGFKKAMRNDDEVSTSVLGETKMSAETKTVAETKAASDSQAAASVERKD</sequence>
<feature type="chain" id="PRO_0000097979" description="Probable Sec-independent protein translocase protein TatE">
    <location>
        <begin position="1"/>
        <end position="85"/>
    </location>
</feature>
<feature type="transmembrane region" description="Helical" evidence="1">
    <location>
        <begin position="1"/>
        <end position="21"/>
    </location>
</feature>
<feature type="region of interest" description="Disordered" evidence="2">
    <location>
        <begin position="64"/>
        <end position="85"/>
    </location>
</feature>
<gene>
    <name evidence="1" type="primary">tatE</name>
    <name type="ordered locus">YPO2597</name>
    <name type="ordered locus">y1170</name>
    <name type="ordered locus">YP_1117</name>
</gene>
<proteinExistence type="inferred from homology"/>
<name>TATE_YERPE</name>
<keyword id="KW-0997">Cell inner membrane</keyword>
<keyword id="KW-1003">Cell membrane</keyword>
<keyword id="KW-0472">Membrane</keyword>
<keyword id="KW-0653">Protein transport</keyword>
<keyword id="KW-1185">Reference proteome</keyword>
<keyword id="KW-0811">Translocation</keyword>
<keyword id="KW-0812">Transmembrane</keyword>
<keyword id="KW-1133">Transmembrane helix</keyword>
<keyword id="KW-0813">Transport</keyword>